<protein>
    <recommendedName>
        <fullName>Probable phosphatase C1620.13</fullName>
        <ecNumber>3.1.3.-</ecNumber>
    </recommendedName>
</protein>
<dbReference type="EC" id="3.1.3.-"/>
<dbReference type="EMBL" id="CU329672">
    <property type="protein sequence ID" value="CAA22497.1"/>
    <property type="molecule type" value="Genomic_DNA"/>
</dbReference>
<dbReference type="PIR" id="T41043">
    <property type="entry name" value="T41043"/>
</dbReference>
<dbReference type="RefSeq" id="NP_588471.1">
    <property type="nucleotide sequence ID" value="NM_001023462.2"/>
</dbReference>
<dbReference type="SMR" id="O94420"/>
<dbReference type="BioGRID" id="275959">
    <property type="interactions" value="4"/>
</dbReference>
<dbReference type="FunCoup" id="O94420">
    <property type="interactions" value="417"/>
</dbReference>
<dbReference type="STRING" id="284812.O94420"/>
<dbReference type="PaxDb" id="4896-SPCC1620.13.1"/>
<dbReference type="EnsemblFungi" id="SPCC1620.13.1">
    <property type="protein sequence ID" value="SPCC1620.13.1:pep"/>
    <property type="gene ID" value="SPCC1620.13"/>
</dbReference>
<dbReference type="KEGG" id="spo:2539394"/>
<dbReference type="PomBase" id="SPCC1620.13"/>
<dbReference type="VEuPathDB" id="FungiDB:SPCC1620.13"/>
<dbReference type="eggNOG" id="KOG0235">
    <property type="taxonomic scope" value="Eukaryota"/>
</dbReference>
<dbReference type="HOGENOM" id="CLU_033323_0_0_1"/>
<dbReference type="InParanoid" id="O94420"/>
<dbReference type="OMA" id="LISPPFW"/>
<dbReference type="PhylomeDB" id="O94420"/>
<dbReference type="PRO" id="PR:O94420"/>
<dbReference type="Proteomes" id="UP000002485">
    <property type="component" value="Chromosome III"/>
</dbReference>
<dbReference type="GO" id="GO:0005737">
    <property type="term" value="C:cytoplasm"/>
    <property type="evidence" value="ECO:0000318"/>
    <property type="project" value="GO_Central"/>
</dbReference>
<dbReference type="GO" id="GO:0005634">
    <property type="term" value="C:nucleus"/>
    <property type="evidence" value="ECO:0007005"/>
    <property type="project" value="PomBase"/>
</dbReference>
<dbReference type="GO" id="GO:0016791">
    <property type="term" value="F:phosphatase activity"/>
    <property type="evidence" value="ECO:0000318"/>
    <property type="project" value="GO_Central"/>
</dbReference>
<dbReference type="CDD" id="cd07067">
    <property type="entry name" value="HP_PGM_like"/>
    <property type="match status" value="1"/>
</dbReference>
<dbReference type="Gene3D" id="3.40.50.1240">
    <property type="entry name" value="Phosphoglycerate mutase-like"/>
    <property type="match status" value="1"/>
</dbReference>
<dbReference type="InterPro" id="IPR013078">
    <property type="entry name" value="His_Pase_superF_clade-1"/>
</dbReference>
<dbReference type="InterPro" id="IPR029033">
    <property type="entry name" value="His_PPase_superfam"/>
</dbReference>
<dbReference type="InterPro" id="IPR051695">
    <property type="entry name" value="Phosphoglycerate_Mutase"/>
</dbReference>
<dbReference type="PANTHER" id="PTHR46517">
    <property type="entry name" value="FRUCTOSE-2,6-BISPHOSPHATASE TIGAR"/>
    <property type="match status" value="1"/>
</dbReference>
<dbReference type="PANTHER" id="PTHR46517:SF1">
    <property type="entry name" value="FRUCTOSE-2,6-BISPHOSPHATASE TIGAR"/>
    <property type="match status" value="1"/>
</dbReference>
<dbReference type="Pfam" id="PF00300">
    <property type="entry name" value="His_Phos_1"/>
    <property type="match status" value="1"/>
</dbReference>
<dbReference type="SMART" id="SM00855">
    <property type="entry name" value="PGAM"/>
    <property type="match status" value="1"/>
</dbReference>
<dbReference type="SUPFAM" id="SSF53254">
    <property type="entry name" value="Phosphoglycerate mutase-like"/>
    <property type="match status" value="1"/>
</dbReference>
<accession>O94420</accession>
<feature type="chain" id="PRO_0000318492" description="Probable phosphatase C1620.13">
    <location>
        <begin position="1"/>
        <end position="282"/>
    </location>
</feature>
<feature type="active site" description="Tele-phosphohistidine intermediate" evidence="1">
    <location>
        <position position="61"/>
    </location>
</feature>
<feature type="active site" description="Proton donor/acceptor" evidence="1">
    <location>
        <position position="135"/>
    </location>
</feature>
<feature type="site" description="Transition state stabilizer" evidence="1">
    <location>
        <position position="201"/>
    </location>
</feature>
<organism>
    <name type="scientific">Schizosaccharomyces pombe (strain 972 / ATCC 24843)</name>
    <name type="common">Fission yeast</name>
    <dbReference type="NCBI Taxonomy" id="284812"/>
    <lineage>
        <taxon>Eukaryota</taxon>
        <taxon>Fungi</taxon>
        <taxon>Dikarya</taxon>
        <taxon>Ascomycota</taxon>
        <taxon>Taphrinomycotina</taxon>
        <taxon>Schizosaccharomycetes</taxon>
        <taxon>Schizosaccharomycetales</taxon>
        <taxon>Schizosaccharomycetaceae</taxon>
        <taxon>Schizosaccharomyces</taxon>
    </lineage>
</organism>
<proteinExistence type="inferred from homology"/>
<name>YQGD_SCHPO</name>
<gene>
    <name type="ORF">SPCC1620.13</name>
</gene>
<sequence length="282" mass="31708">MPLNVTVEEETLQIVEEEPQQEITNTILEEDFNLLDNSFQTDISSTSSQNDSKFTCLLVRHAESEHNVRGIRAGARIDSELTVHGYNQAKKLAKSIRNLDIVCVYSSPQKRAKRTAEEITKVANCPLYISDFLMEKDLGSLEGTSFRYTANYRPREPPMKVTNLESRDSLLTRARGFTDILFNEAIGFEGESGKTIVVVSHGIFLPFLLRAILARARTPLPSMIIPWNNASYCLITIDLGGNSIVKMNCNSHLRGIKRTRKLGSSTYDSKQKPITEFCSKLN</sequence>
<comment type="subcellular location">
    <subcellularLocation>
        <location evidence="2">Nucleus</location>
    </subcellularLocation>
</comment>
<comment type="similarity">
    <text evidence="3">Belongs to the phosphoglycerate mutase family. BPG-dependent PGAM subfamily.</text>
</comment>
<evidence type="ECO:0000250" key="1">
    <source>
        <dbReference type="UniProtKB" id="P62707"/>
    </source>
</evidence>
<evidence type="ECO:0000269" key="2">
    <source>
    </source>
</evidence>
<evidence type="ECO:0000305" key="3"/>
<keyword id="KW-0378">Hydrolase</keyword>
<keyword id="KW-0539">Nucleus</keyword>
<keyword id="KW-1185">Reference proteome</keyword>
<reference key="1">
    <citation type="journal article" date="2002" name="Nature">
        <title>The genome sequence of Schizosaccharomyces pombe.</title>
        <authorList>
            <person name="Wood V."/>
            <person name="Gwilliam R."/>
            <person name="Rajandream M.A."/>
            <person name="Lyne M.H."/>
            <person name="Lyne R."/>
            <person name="Stewart A."/>
            <person name="Sgouros J.G."/>
            <person name="Peat N."/>
            <person name="Hayles J."/>
            <person name="Baker S.G."/>
            <person name="Basham D."/>
            <person name="Bowman S."/>
            <person name="Brooks K."/>
            <person name="Brown D."/>
            <person name="Brown S."/>
            <person name="Chillingworth T."/>
            <person name="Churcher C.M."/>
            <person name="Collins M."/>
            <person name="Connor R."/>
            <person name="Cronin A."/>
            <person name="Davis P."/>
            <person name="Feltwell T."/>
            <person name="Fraser A."/>
            <person name="Gentles S."/>
            <person name="Goble A."/>
            <person name="Hamlin N."/>
            <person name="Harris D.E."/>
            <person name="Hidalgo J."/>
            <person name="Hodgson G."/>
            <person name="Holroyd S."/>
            <person name="Hornsby T."/>
            <person name="Howarth S."/>
            <person name="Huckle E.J."/>
            <person name="Hunt S."/>
            <person name="Jagels K."/>
            <person name="James K.D."/>
            <person name="Jones L."/>
            <person name="Jones M."/>
            <person name="Leather S."/>
            <person name="McDonald S."/>
            <person name="McLean J."/>
            <person name="Mooney P."/>
            <person name="Moule S."/>
            <person name="Mungall K.L."/>
            <person name="Murphy L.D."/>
            <person name="Niblett D."/>
            <person name="Odell C."/>
            <person name="Oliver K."/>
            <person name="O'Neil S."/>
            <person name="Pearson D."/>
            <person name="Quail M.A."/>
            <person name="Rabbinowitsch E."/>
            <person name="Rutherford K.M."/>
            <person name="Rutter S."/>
            <person name="Saunders D."/>
            <person name="Seeger K."/>
            <person name="Sharp S."/>
            <person name="Skelton J."/>
            <person name="Simmonds M.N."/>
            <person name="Squares R."/>
            <person name="Squares S."/>
            <person name="Stevens K."/>
            <person name="Taylor K."/>
            <person name="Taylor R.G."/>
            <person name="Tivey A."/>
            <person name="Walsh S.V."/>
            <person name="Warren T."/>
            <person name="Whitehead S."/>
            <person name="Woodward J.R."/>
            <person name="Volckaert G."/>
            <person name="Aert R."/>
            <person name="Robben J."/>
            <person name="Grymonprez B."/>
            <person name="Weltjens I."/>
            <person name="Vanstreels E."/>
            <person name="Rieger M."/>
            <person name="Schaefer M."/>
            <person name="Mueller-Auer S."/>
            <person name="Gabel C."/>
            <person name="Fuchs M."/>
            <person name="Duesterhoeft A."/>
            <person name="Fritzc C."/>
            <person name="Holzer E."/>
            <person name="Moestl D."/>
            <person name="Hilbert H."/>
            <person name="Borzym K."/>
            <person name="Langer I."/>
            <person name="Beck A."/>
            <person name="Lehrach H."/>
            <person name="Reinhardt R."/>
            <person name="Pohl T.M."/>
            <person name="Eger P."/>
            <person name="Zimmermann W."/>
            <person name="Wedler H."/>
            <person name="Wambutt R."/>
            <person name="Purnelle B."/>
            <person name="Goffeau A."/>
            <person name="Cadieu E."/>
            <person name="Dreano S."/>
            <person name="Gloux S."/>
            <person name="Lelaure V."/>
            <person name="Mottier S."/>
            <person name="Galibert F."/>
            <person name="Aves S.J."/>
            <person name="Xiang Z."/>
            <person name="Hunt C."/>
            <person name="Moore K."/>
            <person name="Hurst S.M."/>
            <person name="Lucas M."/>
            <person name="Rochet M."/>
            <person name="Gaillardin C."/>
            <person name="Tallada V.A."/>
            <person name="Garzon A."/>
            <person name="Thode G."/>
            <person name="Daga R.R."/>
            <person name="Cruzado L."/>
            <person name="Jimenez J."/>
            <person name="Sanchez M."/>
            <person name="del Rey F."/>
            <person name="Benito J."/>
            <person name="Dominguez A."/>
            <person name="Revuelta J.L."/>
            <person name="Moreno S."/>
            <person name="Armstrong J."/>
            <person name="Forsburg S.L."/>
            <person name="Cerutti L."/>
            <person name="Lowe T."/>
            <person name="McCombie W.R."/>
            <person name="Paulsen I."/>
            <person name="Potashkin J."/>
            <person name="Shpakovski G.V."/>
            <person name="Ussery D."/>
            <person name="Barrell B.G."/>
            <person name="Nurse P."/>
        </authorList>
    </citation>
    <scope>NUCLEOTIDE SEQUENCE [LARGE SCALE GENOMIC DNA]</scope>
    <source>
        <strain>972 / ATCC 24843</strain>
    </source>
</reference>
<reference key="2">
    <citation type="journal article" date="2006" name="Nat. Biotechnol.">
        <title>ORFeome cloning and global analysis of protein localization in the fission yeast Schizosaccharomyces pombe.</title>
        <authorList>
            <person name="Matsuyama A."/>
            <person name="Arai R."/>
            <person name="Yashiroda Y."/>
            <person name="Shirai A."/>
            <person name="Kamata A."/>
            <person name="Sekido S."/>
            <person name="Kobayashi Y."/>
            <person name="Hashimoto A."/>
            <person name="Hamamoto M."/>
            <person name="Hiraoka Y."/>
            <person name="Horinouchi S."/>
            <person name="Yoshida M."/>
        </authorList>
    </citation>
    <scope>SUBCELLULAR LOCATION [LARGE SCALE ANALYSIS]</scope>
</reference>